<protein>
    <recommendedName>
        <fullName evidence="1">GMP synthase [glutamine-hydrolyzing]</fullName>
        <ecNumber evidence="1">6.3.5.2</ecNumber>
    </recommendedName>
    <alternativeName>
        <fullName evidence="1">GMP synthetase</fullName>
    </alternativeName>
    <alternativeName>
        <fullName evidence="1">Glutamine amidotransferase</fullName>
    </alternativeName>
</protein>
<dbReference type="EC" id="6.3.5.2" evidence="1"/>
<dbReference type="EMBL" id="CP000023">
    <property type="protein sequence ID" value="AAV60553.1"/>
    <property type="molecule type" value="Genomic_DNA"/>
</dbReference>
<dbReference type="SMR" id="Q5M4P4"/>
<dbReference type="STRING" id="264199.stu0886"/>
<dbReference type="MEROPS" id="C26.957"/>
<dbReference type="KEGG" id="stl:stu0886"/>
<dbReference type="eggNOG" id="COG0518">
    <property type="taxonomic scope" value="Bacteria"/>
</dbReference>
<dbReference type="eggNOG" id="COG0519">
    <property type="taxonomic scope" value="Bacteria"/>
</dbReference>
<dbReference type="HOGENOM" id="CLU_014340_0_5_9"/>
<dbReference type="UniPathway" id="UPA00189">
    <property type="reaction ID" value="UER00296"/>
</dbReference>
<dbReference type="Proteomes" id="UP000001170">
    <property type="component" value="Chromosome"/>
</dbReference>
<dbReference type="GO" id="GO:0005829">
    <property type="term" value="C:cytosol"/>
    <property type="evidence" value="ECO:0007669"/>
    <property type="project" value="TreeGrafter"/>
</dbReference>
<dbReference type="GO" id="GO:0005524">
    <property type="term" value="F:ATP binding"/>
    <property type="evidence" value="ECO:0007669"/>
    <property type="project" value="UniProtKB-UniRule"/>
</dbReference>
<dbReference type="GO" id="GO:0003921">
    <property type="term" value="F:GMP synthase activity"/>
    <property type="evidence" value="ECO:0007669"/>
    <property type="project" value="InterPro"/>
</dbReference>
<dbReference type="CDD" id="cd01742">
    <property type="entry name" value="GATase1_GMP_Synthase"/>
    <property type="match status" value="1"/>
</dbReference>
<dbReference type="CDD" id="cd01997">
    <property type="entry name" value="GMP_synthase_C"/>
    <property type="match status" value="1"/>
</dbReference>
<dbReference type="FunFam" id="3.30.300.10:FF:000002">
    <property type="entry name" value="GMP synthase [glutamine-hydrolyzing]"/>
    <property type="match status" value="1"/>
</dbReference>
<dbReference type="FunFam" id="3.40.50.620:FF:000001">
    <property type="entry name" value="GMP synthase [glutamine-hydrolyzing]"/>
    <property type="match status" value="1"/>
</dbReference>
<dbReference type="FunFam" id="3.40.50.880:FF:000001">
    <property type="entry name" value="GMP synthase [glutamine-hydrolyzing]"/>
    <property type="match status" value="1"/>
</dbReference>
<dbReference type="Gene3D" id="3.30.300.10">
    <property type="match status" value="1"/>
</dbReference>
<dbReference type="Gene3D" id="3.40.50.880">
    <property type="match status" value="1"/>
</dbReference>
<dbReference type="Gene3D" id="3.40.50.620">
    <property type="entry name" value="HUPs"/>
    <property type="match status" value="1"/>
</dbReference>
<dbReference type="HAMAP" id="MF_00344">
    <property type="entry name" value="GMP_synthase"/>
    <property type="match status" value="1"/>
</dbReference>
<dbReference type="InterPro" id="IPR029062">
    <property type="entry name" value="Class_I_gatase-like"/>
</dbReference>
<dbReference type="InterPro" id="IPR017926">
    <property type="entry name" value="GATASE"/>
</dbReference>
<dbReference type="InterPro" id="IPR001674">
    <property type="entry name" value="GMP_synth_C"/>
</dbReference>
<dbReference type="InterPro" id="IPR004739">
    <property type="entry name" value="GMP_synth_GATase"/>
</dbReference>
<dbReference type="InterPro" id="IPR022955">
    <property type="entry name" value="GMP_synthase"/>
</dbReference>
<dbReference type="InterPro" id="IPR025777">
    <property type="entry name" value="GMPS_ATP_PPase_dom"/>
</dbReference>
<dbReference type="InterPro" id="IPR022310">
    <property type="entry name" value="NAD/GMP_synthase"/>
</dbReference>
<dbReference type="InterPro" id="IPR014729">
    <property type="entry name" value="Rossmann-like_a/b/a_fold"/>
</dbReference>
<dbReference type="NCBIfam" id="TIGR00884">
    <property type="entry name" value="guaA_Cterm"/>
    <property type="match status" value="1"/>
</dbReference>
<dbReference type="NCBIfam" id="TIGR00888">
    <property type="entry name" value="guaA_Nterm"/>
    <property type="match status" value="1"/>
</dbReference>
<dbReference type="NCBIfam" id="NF000848">
    <property type="entry name" value="PRK00074.1"/>
    <property type="match status" value="1"/>
</dbReference>
<dbReference type="PANTHER" id="PTHR11922:SF2">
    <property type="entry name" value="GMP SYNTHASE [GLUTAMINE-HYDROLYZING]"/>
    <property type="match status" value="1"/>
</dbReference>
<dbReference type="PANTHER" id="PTHR11922">
    <property type="entry name" value="GMP SYNTHASE-RELATED"/>
    <property type="match status" value="1"/>
</dbReference>
<dbReference type="Pfam" id="PF00117">
    <property type="entry name" value="GATase"/>
    <property type="match status" value="1"/>
</dbReference>
<dbReference type="Pfam" id="PF00958">
    <property type="entry name" value="GMP_synt_C"/>
    <property type="match status" value="1"/>
</dbReference>
<dbReference type="Pfam" id="PF02540">
    <property type="entry name" value="NAD_synthase"/>
    <property type="match status" value="1"/>
</dbReference>
<dbReference type="PRINTS" id="PR00097">
    <property type="entry name" value="ANTSNTHASEII"/>
</dbReference>
<dbReference type="PRINTS" id="PR00099">
    <property type="entry name" value="CPSGATASE"/>
</dbReference>
<dbReference type="PRINTS" id="PR00096">
    <property type="entry name" value="GATASE"/>
</dbReference>
<dbReference type="SUPFAM" id="SSF52402">
    <property type="entry name" value="Adenine nucleotide alpha hydrolases-like"/>
    <property type="match status" value="1"/>
</dbReference>
<dbReference type="SUPFAM" id="SSF52317">
    <property type="entry name" value="Class I glutamine amidotransferase-like"/>
    <property type="match status" value="1"/>
</dbReference>
<dbReference type="SUPFAM" id="SSF54810">
    <property type="entry name" value="GMP synthetase C-terminal dimerisation domain"/>
    <property type="match status" value="1"/>
</dbReference>
<dbReference type="PROSITE" id="PS51273">
    <property type="entry name" value="GATASE_TYPE_1"/>
    <property type="match status" value="1"/>
</dbReference>
<dbReference type="PROSITE" id="PS51553">
    <property type="entry name" value="GMPS_ATP_PPASE"/>
    <property type="match status" value="1"/>
</dbReference>
<gene>
    <name evidence="1" type="primary">guaA</name>
    <name type="ordered locus">stu0886</name>
</gene>
<evidence type="ECO:0000255" key="1">
    <source>
        <dbReference type="HAMAP-Rule" id="MF_00344"/>
    </source>
</evidence>
<accession>Q5M4P4</accession>
<keyword id="KW-0067">ATP-binding</keyword>
<keyword id="KW-0315">Glutamine amidotransferase</keyword>
<keyword id="KW-0332">GMP biosynthesis</keyword>
<keyword id="KW-0436">Ligase</keyword>
<keyword id="KW-0547">Nucleotide-binding</keyword>
<keyword id="KW-0658">Purine biosynthesis</keyword>
<keyword id="KW-1185">Reference proteome</keyword>
<reference key="1">
    <citation type="journal article" date="2004" name="Nat. Biotechnol.">
        <title>Complete sequence and comparative genome analysis of the dairy bacterium Streptococcus thermophilus.</title>
        <authorList>
            <person name="Bolotin A."/>
            <person name="Quinquis B."/>
            <person name="Renault P."/>
            <person name="Sorokin A."/>
            <person name="Ehrlich S.D."/>
            <person name="Kulakauskas S."/>
            <person name="Lapidus A."/>
            <person name="Goltsman E."/>
            <person name="Mazur M."/>
            <person name="Pusch G.D."/>
            <person name="Fonstein M."/>
            <person name="Overbeek R."/>
            <person name="Kyprides N."/>
            <person name="Purnelle B."/>
            <person name="Prozzi D."/>
            <person name="Ngui K."/>
            <person name="Masuy D."/>
            <person name="Hancy F."/>
            <person name="Burteau S."/>
            <person name="Boutry M."/>
            <person name="Delcour J."/>
            <person name="Goffeau A."/>
            <person name="Hols P."/>
        </authorList>
    </citation>
    <scope>NUCLEOTIDE SEQUENCE [LARGE SCALE GENOMIC DNA]</scope>
    <source>
        <strain>ATCC BAA-250 / LMG 18311</strain>
    </source>
</reference>
<organism>
    <name type="scientific">Streptococcus thermophilus (strain ATCC BAA-250 / LMG 18311)</name>
    <dbReference type="NCBI Taxonomy" id="264199"/>
    <lineage>
        <taxon>Bacteria</taxon>
        <taxon>Bacillati</taxon>
        <taxon>Bacillota</taxon>
        <taxon>Bacilli</taxon>
        <taxon>Lactobacillales</taxon>
        <taxon>Streptococcaceae</taxon>
        <taxon>Streptococcus</taxon>
    </lineage>
</organism>
<sequence length="527" mass="58311">MQKERVIMTNISTLNDVQKIIVLDYGSQYNQLIARRIREFGVFSELKSHKITADEVRAINPIGIILSGGPNSVYAEDAFGIDEEIFELGIPILGICYGMQLLTHKLGGKVVPAGEAGNREYGQSTLRLRAQSELFAGTPEEQVVLMSHGDAVTEIPEGFHLVADSVDCPFAAMEDTKKNFYGIQFHPEVRHTVYGNDILKNFAFSICGAKGDWSMANFVDMQIAQIRETVGDRKVLLGLSGGVDSSVVGVLLQKAIGDQLTCIFVDHGLLRKGEGDQVMEMLGGKFGLNIIRVDASKRFLDLLAGVDDPEKKRKIIGNEFVHVFDDEASKLKGVDFLAQGTLYTDIIESGTETAQTIKSHHNVGGLPEDMQFELIEPLNTLFKDEVRALGTELGMPDEVVWRQPFPGPGLAIRIMGEITEEKLETVRESDAILREEIAKAGLDRDVWQYFTVNTGVRSVGVMGDGRTYDYTIAIRAITSIDGMTADFAKLPWEVLQKISVRIVNEVDHVNRIVYDITSKPPATVEWE</sequence>
<name>GUAA_STRT2</name>
<feature type="chain" id="PRO_0000229476" description="GMP synthase [glutamine-hydrolyzing]">
    <location>
        <begin position="1"/>
        <end position="527"/>
    </location>
</feature>
<feature type="domain" description="Glutamine amidotransferase type-1" evidence="1">
    <location>
        <begin position="19"/>
        <end position="212"/>
    </location>
</feature>
<feature type="domain" description="GMPS ATP-PPase" evidence="1">
    <location>
        <begin position="213"/>
        <end position="402"/>
    </location>
</feature>
<feature type="active site" description="Nucleophile" evidence="1">
    <location>
        <position position="96"/>
    </location>
</feature>
<feature type="active site" evidence="1">
    <location>
        <position position="186"/>
    </location>
</feature>
<feature type="active site" evidence="1">
    <location>
        <position position="188"/>
    </location>
</feature>
<feature type="binding site" evidence="1">
    <location>
        <begin position="240"/>
        <end position="246"/>
    </location>
    <ligand>
        <name>ATP</name>
        <dbReference type="ChEBI" id="CHEBI:30616"/>
    </ligand>
</feature>
<comment type="function">
    <text evidence="1">Catalyzes the synthesis of GMP from XMP.</text>
</comment>
<comment type="catalytic activity">
    <reaction evidence="1">
        <text>XMP + L-glutamine + ATP + H2O = GMP + L-glutamate + AMP + diphosphate + 2 H(+)</text>
        <dbReference type="Rhea" id="RHEA:11680"/>
        <dbReference type="ChEBI" id="CHEBI:15377"/>
        <dbReference type="ChEBI" id="CHEBI:15378"/>
        <dbReference type="ChEBI" id="CHEBI:29985"/>
        <dbReference type="ChEBI" id="CHEBI:30616"/>
        <dbReference type="ChEBI" id="CHEBI:33019"/>
        <dbReference type="ChEBI" id="CHEBI:57464"/>
        <dbReference type="ChEBI" id="CHEBI:58115"/>
        <dbReference type="ChEBI" id="CHEBI:58359"/>
        <dbReference type="ChEBI" id="CHEBI:456215"/>
        <dbReference type="EC" id="6.3.5.2"/>
    </reaction>
</comment>
<comment type="pathway">
    <text evidence="1">Purine metabolism; GMP biosynthesis; GMP from XMP (L-Gln route): step 1/1.</text>
</comment>
<comment type="subunit">
    <text evidence="1">Homodimer.</text>
</comment>
<proteinExistence type="inferred from homology"/>